<comment type="function">
    <text evidence="1">GTPase that plays an essential role in the late steps of ribosome biogenesis.</text>
</comment>
<comment type="subunit">
    <text evidence="1">Associates with the 50S ribosomal subunit.</text>
</comment>
<comment type="similarity">
    <text evidence="1">Belongs to the TRAFAC class TrmE-Era-EngA-EngB-Septin-like GTPase superfamily. EngA (Der) GTPase family.</text>
</comment>
<proteinExistence type="inferred from homology"/>
<reference key="1">
    <citation type="journal article" date="2009" name="PLoS Genet.">
        <title>Organised genome dynamics in the Escherichia coli species results in highly diverse adaptive paths.</title>
        <authorList>
            <person name="Touchon M."/>
            <person name="Hoede C."/>
            <person name="Tenaillon O."/>
            <person name="Barbe V."/>
            <person name="Baeriswyl S."/>
            <person name="Bidet P."/>
            <person name="Bingen E."/>
            <person name="Bonacorsi S."/>
            <person name="Bouchier C."/>
            <person name="Bouvet O."/>
            <person name="Calteau A."/>
            <person name="Chiapello H."/>
            <person name="Clermont O."/>
            <person name="Cruveiller S."/>
            <person name="Danchin A."/>
            <person name="Diard M."/>
            <person name="Dossat C."/>
            <person name="Karoui M.E."/>
            <person name="Frapy E."/>
            <person name="Garry L."/>
            <person name="Ghigo J.M."/>
            <person name="Gilles A.M."/>
            <person name="Johnson J."/>
            <person name="Le Bouguenec C."/>
            <person name="Lescat M."/>
            <person name="Mangenot S."/>
            <person name="Martinez-Jehanne V."/>
            <person name="Matic I."/>
            <person name="Nassif X."/>
            <person name="Oztas S."/>
            <person name="Petit M.A."/>
            <person name="Pichon C."/>
            <person name="Rouy Z."/>
            <person name="Ruf C.S."/>
            <person name="Schneider D."/>
            <person name="Tourret J."/>
            <person name="Vacherie B."/>
            <person name="Vallenet D."/>
            <person name="Medigue C."/>
            <person name="Rocha E.P.C."/>
            <person name="Denamur E."/>
        </authorList>
    </citation>
    <scope>NUCLEOTIDE SEQUENCE [LARGE SCALE GENOMIC DNA]</scope>
    <source>
        <strain>S88 / ExPEC</strain>
    </source>
</reference>
<dbReference type="EMBL" id="CU928161">
    <property type="protein sequence ID" value="CAR03954.1"/>
    <property type="molecule type" value="Genomic_DNA"/>
</dbReference>
<dbReference type="RefSeq" id="WP_001350310.1">
    <property type="nucleotide sequence ID" value="NC_011742.1"/>
</dbReference>
<dbReference type="SMR" id="B7MHZ6"/>
<dbReference type="KEGG" id="ecz:ECS88_2687"/>
<dbReference type="HOGENOM" id="CLU_016077_6_2_6"/>
<dbReference type="Proteomes" id="UP000000747">
    <property type="component" value="Chromosome"/>
</dbReference>
<dbReference type="GO" id="GO:0005525">
    <property type="term" value="F:GTP binding"/>
    <property type="evidence" value="ECO:0007669"/>
    <property type="project" value="UniProtKB-UniRule"/>
</dbReference>
<dbReference type="GO" id="GO:0043022">
    <property type="term" value="F:ribosome binding"/>
    <property type="evidence" value="ECO:0007669"/>
    <property type="project" value="TreeGrafter"/>
</dbReference>
<dbReference type="GO" id="GO:0042254">
    <property type="term" value="P:ribosome biogenesis"/>
    <property type="evidence" value="ECO:0007669"/>
    <property type="project" value="UniProtKB-KW"/>
</dbReference>
<dbReference type="CDD" id="cd01894">
    <property type="entry name" value="EngA1"/>
    <property type="match status" value="1"/>
</dbReference>
<dbReference type="CDD" id="cd01895">
    <property type="entry name" value="EngA2"/>
    <property type="match status" value="1"/>
</dbReference>
<dbReference type="FunFam" id="3.30.300.20:FF:000004">
    <property type="entry name" value="GTPase Der"/>
    <property type="match status" value="1"/>
</dbReference>
<dbReference type="FunFam" id="3.40.50.300:FF:000040">
    <property type="entry name" value="GTPase Der"/>
    <property type="match status" value="1"/>
</dbReference>
<dbReference type="FunFam" id="3.40.50.300:FF:000057">
    <property type="entry name" value="GTPase Der"/>
    <property type="match status" value="1"/>
</dbReference>
<dbReference type="Gene3D" id="3.30.300.20">
    <property type="match status" value="1"/>
</dbReference>
<dbReference type="Gene3D" id="3.40.50.300">
    <property type="entry name" value="P-loop containing nucleotide triphosphate hydrolases"/>
    <property type="match status" value="2"/>
</dbReference>
<dbReference type="HAMAP" id="MF_00195">
    <property type="entry name" value="GTPase_Der"/>
    <property type="match status" value="1"/>
</dbReference>
<dbReference type="InterPro" id="IPR031166">
    <property type="entry name" value="G_ENGA"/>
</dbReference>
<dbReference type="InterPro" id="IPR006073">
    <property type="entry name" value="GTP-bd"/>
</dbReference>
<dbReference type="InterPro" id="IPR016484">
    <property type="entry name" value="GTPase_Der"/>
</dbReference>
<dbReference type="InterPro" id="IPR032859">
    <property type="entry name" value="KH_dom-like"/>
</dbReference>
<dbReference type="InterPro" id="IPR015946">
    <property type="entry name" value="KH_dom-like_a/b"/>
</dbReference>
<dbReference type="InterPro" id="IPR027417">
    <property type="entry name" value="P-loop_NTPase"/>
</dbReference>
<dbReference type="InterPro" id="IPR005225">
    <property type="entry name" value="Small_GTP-bd"/>
</dbReference>
<dbReference type="NCBIfam" id="TIGR03594">
    <property type="entry name" value="GTPase_EngA"/>
    <property type="match status" value="1"/>
</dbReference>
<dbReference type="NCBIfam" id="TIGR00231">
    <property type="entry name" value="small_GTP"/>
    <property type="match status" value="2"/>
</dbReference>
<dbReference type="PANTHER" id="PTHR43834">
    <property type="entry name" value="GTPASE DER"/>
    <property type="match status" value="1"/>
</dbReference>
<dbReference type="PANTHER" id="PTHR43834:SF6">
    <property type="entry name" value="GTPASE DER"/>
    <property type="match status" value="1"/>
</dbReference>
<dbReference type="Pfam" id="PF14714">
    <property type="entry name" value="KH_dom-like"/>
    <property type="match status" value="1"/>
</dbReference>
<dbReference type="Pfam" id="PF01926">
    <property type="entry name" value="MMR_HSR1"/>
    <property type="match status" value="2"/>
</dbReference>
<dbReference type="PIRSF" id="PIRSF006485">
    <property type="entry name" value="GTP-binding_EngA"/>
    <property type="match status" value="1"/>
</dbReference>
<dbReference type="PRINTS" id="PR00326">
    <property type="entry name" value="GTP1OBG"/>
</dbReference>
<dbReference type="SUPFAM" id="SSF52540">
    <property type="entry name" value="P-loop containing nucleoside triphosphate hydrolases"/>
    <property type="match status" value="2"/>
</dbReference>
<dbReference type="PROSITE" id="PS51712">
    <property type="entry name" value="G_ENGA"/>
    <property type="match status" value="2"/>
</dbReference>
<accession>B7MHZ6</accession>
<evidence type="ECO:0000255" key="1">
    <source>
        <dbReference type="HAMAP-Rule" id="MF_00195"/>
    </source>
</evidence>
<gene>
    <name evidence="1" type="primary">der</name>
    <name type="synonym">engA</name>
    <name type="ordered locus">ECS88_2687</name>
</gene>
<organism>
    <name type="scientific">Escherichia coli O45:K1 (strain S88 / ExPEC)</name>
    <dbReference type="NCBI Taxonomy" id="585035"/>
    <lineage>
        <taxon>Bacteria</taxon>
        <taxon>Pseudomonadati</taxon>
        <taxon>Pseudomonadota</taxon>
        <taxon>Gammaproteobacteria</taxon>
        <taxon>Enterobacterales</taxon>
        <taxon>Enterobacteriaceae</taxon>
        <taxon>Escherichia</taxon>
    </lineage>
</organism>
<keyword id="KW-0342">GTP-binding</keyword>
<keyword id="KW-0547">Nucleotide-binding</keyword>
<keyword id="KW-1185">Reference proteome</keyword>
<keyword id="KW-0677">Repeat</keyword>
<keyword id="KW-0690">Ribosome biogenesis</keyword>
<feature type="chain" id="PRO_1000118643" description="GTPase Der">
    <location>
        <begin position="1"/>
        <end position="490"/>
    </location>
</feature>
<feature type="domain" description="EngA-type G 1">
    <location>
        <begin position="3"/>
        <end position="166"/>
    </location>
</feature>
<feature type="domain" description="EngA-type G 2">
    <location>
        <begin position="203"/>
        <end position="376"/>
    </location>
</feature>
<feature type="domain" description="KH-like" evidence="1">
    <location>
        <begin position="377"/>
        <end position="461"/>
    </location>
</feature>
<feature type="binding site" evidence="1">
    <location>
        <begin position="9"/>
        <end position="16"/>
    </location>
    <ligand>
        <name>GTP</name>
        <dbReference type="ChEBI" id="CHEBI:37565"/>
        <label>1</label>
    </ligand>
</feature>
<feature type="binding site" evidence="1">
    <location>
        <begin position="56"/>
        <end position="60"/>
    </location>
    <ligand>
        <name>GTP</name>
        <dbReference type="ChEBI" id="CHEBI:37565"/>
        <label>1</label>
    </ligand>
</feature>
<feature type="binding site" evidence="1">
    <location>
        <begin position="118"/>
        <end position="121"/>
    </location>
    <ligand>
        <name>GTP</name>
        <dbReference type="ChEBI" id="CHEBI:37565"/>
        <label>1</label>
    </ligand>
</feature>
<feature type="binding site" evidence="1">
    <location>
        <begin position="209"/>
        <end position="216"/>
    </location>
    <ligand>
        <name>GTP</name>
        <dbReference type="ChEBI" id="CHEBI:37565"/>
        <label>2</label>
    </ligand>
</feature>
<feature type="binding site" evidence="1">
    <location>
        <begin position="256"/>
        <end position="260"/>
    </location>
    <ligand>
        <name>GTP</name>
        <dbReference type="ChEBI" id="CHEBI:37565"/>
        <label>2</label>
    </ligand>
</feature>
<feature type="binding site" evidence="1">
    <location>
        <begin position="321"/>
        <end position="324"/>
    </location>
    <ligand>
        <name>GTP</name>
        <dbReference type="ChEBI" id="CHEBI:37565"/>
        <label>2</label>
    </ligand>
</feature>
<name>DER_ECO45</name>
<sequence length="490" mass="55009">MVPVVALVGRPNVGKSTLFNRLTRTRDALVADFPGLTRDRKYGRAEIEGREFICIDTGGIDGTEDGVETRMAEQSLLAIEEADVVLFMVDARSGLMPADEAIAKHLRSREKPTFLVANKTDGLDPDQAVVDFYALGLGEIYPIAASHGRGVLSLLEHVLLPWMEDLAPQEEVDEDAEYWAQFEAEENGEEEEEDDFDPQSLPIKLAIVGRPNVGKSTLTNRILGEERVVVYDMPGTTRDSIYIPMERDGREYVLIDTAGVRKRGKITDAVEKFSVIKTLQAIEDANVVMLVIDAREGISDQDLSLLGFILNSGRSLVIVVNKWDGLSQEVKEQVKETLDFRLGFIDFARVHFISALHGSGVGNLFESVREAYDSSTRRVGTSMLTRIMTMAVEDHQPPLVRGRRVKLKYAHAGGYNPPIVVIHGNQVKDLPDSYKRYLMNYFRKSLDVMGSPIRIQFKEGENPYANKRNTLTPTQMRKRKRLMKHIKKSK</sequence>
<protein>
    <recommendedName>
        <fullName evidence="1">GTPase Der</fullName>
    </recommendedName>
    <alternativeName>
        <fullName evidence="1">GTP-binding protein EngA</fullName>
    </alternativeName>
</protein>